<name>PHB2_SCHPO</name>
<gene>
    <name type="primary">phb2</name>
    <name type="ORF">SPCC1322.16</name>
</gene>
<organism>
    <name type="scientific">Schizosaccharomyces pombe (strain 972 / ATCC 24843)</name>
    <name type="common">Fission yeast</name>
    <dbReference type="NCBI Taxonomy" id="284812"/>
    <lineage>
        <taxon>Eukaryota</taxon>
        <taxon>Fungi</taxon>
        <taxon>Dikarya</taxon>
        <taxon>Ascomycota</taxon>
        <taxon>Taphrinomycotina</taxon>
        <taxon>Schizosaccharomycetes</taxon>
        <taxon>Schizosaccharomycetales</taxon>
        <taxon>Schizosaccharomycetaceae</taxon>
        <taxon>Schizosaccharomyces</taxon>
    </lineage>
</organism>
<dbReference type="EMBL" id="CU329672">
    <property type="protein sequence ID" value="CAA22869.2"/>
    <property type="molecule type" value="Genomic_DNA"/>
</dbReference>
<dbReference type="PIR" id="T40947">
    <property type="entry name" value="T40947"/>
</dbReference>
<dbReference type="RefSeq" id="NP_588144.2">
    <property type="nucleotide sequence ID" value="NM_001023134.2"/>
</dbReference>
<dbReference type="SMR" id="O94550"/>
<dbReference type="BioGRID" id="275466">
    <property type="interactions" value="7"/>
</dbReference>
<dbReference type="FunCoup" id="O94550">
    <property type="interactions" value="715"/>
</dbReference>
<dbReference type="STRING" id="284812.O94550"/>
<dbReference type="PaxDb" id="4896-SPCC1322.16.1"/>
<dbReference type="EnsemblFungi" id="SPCC1322.16.1">
    <property type="protein sequence ID" value="SPCC1322.16.1:pep"/>
    <property type="gene ID" value="SPCC1322.16"/>
</dbReference>
<dbReference type="GeneID" id="2538888"/>
<dbReference type="KEGG" id="spo:2538888"/>
<dbReference type="PomBase" id="SPCC1322.16">
    <property type="gene designation" value="phb2"/>
</dbReference>
<dbReference type="VEuPathDB" id="FungiDB:SPCC1322.16"/>
<dbReference type="eggNOG" id="KOG3090">
    <property type="taxonomic scope" value="Eukaryota"/>
</dbReference>
<dbReference type="HOGENOM" id="CLU_047969_0_2_1"/>
<dbReference type="InParanoid" id="O94550"/>
<dbReference type="OMA" id="NEGTHFQ"/>
<dbReference type="PRO" id="PR:O94550"/>
<dbReference type="Proteomes" id="UP000002485">
    <property type="component" value="Chromosome III"/>
</dbReference>
<dbReference type="GO" id="GO:0005743">
    <property type="term" value="C:mitochondrial inner membrane"/>
    <property type="evidence" value="ECO:0000266"/>
    <property type="project" value="PomBase"/>
</dbReference>
<dbReference type="GO" id="GO:0005739">
    <property type="term" value="C:mitochondrion"/>
    <property type="evidence" value="ECO:0000314"/>
    <property type="project" value="PomBase"/>
</dbReference>
<dbReference type="GO" id="GO:0140580">
    <property type="term" value="F:mitochondrion autophagosome adaptor activity"/>
    <property type="evidence" value="ECO:0000304"/>
    <property type="project" value="PomBase"/>
</dbReference>
<dbReference type="GO" id="GO:0007005">
    <property type="term" value="P:mitochondrion organization"/>
    <property type="evidence" value="ECO:0000318"/>
    <property type="project" value="GO_Central"/>
</dbReference>
<dbReference type="GO" id="GO:0000423">
    <property type="term" value="P:mitophagy"/>
    <property type="evidence" value="ECO:0000304"/>
    <property type="project" value="PomBase"/>
</dbReference>
<dbReference type="CDD" id="cd03401">
    <property type="entry name" value="SPFH_prohibitin"/>
    <property type="match status" value="1"/>
</dbReference>
<dbReference type="FunFam" id="3.30.479.30:FF:000001">
    <property type="entry name" value="Prohibitin 2"/>
    <property type="match status" value="1"/>
</dbReference>
<dbReference type="Gene3D" id="3.30.479.30">
    <property type="entry name" value="Band 7 domain"/>
    <property type="match status" value="1"/>
</dbReference>
<dbReference type="InterPro" id="IPR001107">
    <property type="entry name" value="Band_7"/>
</dbReference>
<dbReference type="InterPro" id="IPR036013">
    <property type="entry name" value="Band_7/SPFH_dom_sf"/>
</dbReference>
<dbReference type="InterPro" id="IPR000163">
    <property type="entry name" value="Prohibitin"/>
</dbReference>
<dbReference type="PANTHER" id="PTHR23222">
    <property type="entry name" value="PROHIBITIN"/>
    <property type="match status" value="1"/>
</dbReference>
<dbReference type="PANTHER" id="PTHR23222:SF1">
    <property type="entry name" value="PROHIBITIN-2"/>
    <property type="match status" value="1"/>
</dbReference>
<dbReference type="Pfam" id="PF01145">
    <property type="entry name" value="Band_7"/>
    <property type="match status" value="1"/>
</dbReference>
<dbReference type="PRINTS" id="PR00679">
    <property type="entry name" value="PROHIBITIN"/>
</dbReference>
<dbReference type="SMART" id="SM00244">
    <property type="entry name" value="PHB"/>
    <property type="match status" value="1"/>
</dbReference>
<dbReference type="SUPFAM" id="SSF117892">
    <property type="entry name" value="Band 7/SPFH domain"/>
    <property type="match status" value="1"/>
</dbReference>
<protein>
    <recommendedName>
        <fullName>Prohibitin-2</fullName>
    </recommendedName>
</protein>
<evidence type="ECO:0000250" key="1">
    <source>
        <dbReference type="UniProtKB" id="P50085"/>
    </source>
</evidence>
<evidence type="ECO:0000255" key="2"/>
<evidence type="ECO:0000305" key="3"/>
<accession>O94550</accession>
<keyword id="KW-0472">Membrane</keyword>
<keyword id="KW-0496">Mitochondrion</keyword>
<keyword id="KW-0999">Mitochondrion inner membrane</keyword>
<keyword id="KW-1185">Reference proteome</keyword>
<keyword id="KW-0735">Signal-anchor</keyword>
<keyword id="KW-0812">Transmembrane</keyword>
<keyword id="KW-1133">Transmembrane helix</keyword>
<sequence>MNRQRPFQQMNDLMKRGLPKGKYAFTGTGLLLALGLAGFAVQTSLFNVDGGHRAIKYSRIGGIKNLIYPEGTHFLIPWIETAIDYDVRAKPRNISSLTGTKDLQMVNINCRVLSRPDVHALPKIYRTLGGDYDERVLPSIVNEVLKSVVAQFNASQLITQRERVSRLVRENLMKRAARFNILLDDVSLTHVQFSPEFTAAVEAKQIAQQDAQRATFYVDRARMEKQGFIVRAQGEGRAAQLIGEAIKNKPGFIELRKLETAREIANILSKSNNKVMLNASTLLLDDIK</sequence>
<reference key="1">
    <citation type="journal article" date="2002" name="Nature">
        <title>The genome sequence of Schizosaccharomyces pombe.</title>
        <authorList>
            <person name="Wood V."/>
            <person name="Gwilliam R."/>
            <person name="Rajandream M.A."/>
            <person name="Lyne M.H."/>
            <person name="Lyne R."/>
            <person name="Stewart A."/>
            <person name="Sgouros J.G."/>
            <person name="Peat N."/>
            <person name="Hayles J."/>
            <person name="Baker S.G."/>
            <person name="Basham D."/>
            <person name="Bowman S."/>
            <person name="Brooks K."/>
            <person name="Brown D."/>
            <person name="Brown S."/>
            <person name="Chillingworth T."/>
            <person name="Churcher C.M."/>
            <person name="Collins M."/>
            <person name="Connor R."/>
            <person name="Cronin A."/>
            <person name="Davis P."/>
            <person name="Feltwell T."/>
            <person name="Fraser A."/>
            <person name="Gentles S."/>
            <person name="Goble A."/>
            <person name="Hamlin N."/>
            <person name="Harris D.E."/>
            <person name="Hidalgo J."/>
            <person name="Hodgson G."/>
            <person name="Holroyd S."/>
            <person name="Hornsby T."/>
            <person name="Howarth S."/>
            <person name="Huckle E.J."/>
            <person name="Hunt S."/>
            <person name="Jagels K."/>
            <person name="James K.D."/>
            <person name="Jones L."/>
            <person name="Jones M."/>
            <person name="Leather S."/>
            <person name="McDonald S."/>
            <person name="McLean J."/>
            <person name="Mooney P."/>
            <person name="Moule S."/>
            <person name="Mungall K.L."/>
            <person name="Murphy L.D."/>
            <person name="Niblett D."/>
            <person name="Odell C."/>
            <person name="Oliver K."/>
            <person name="O'Neil S."/>
            <person name="Pearson D."/>
            <person name="Quail M.A."/>
            <person name="Rabbinowitsch E."/>
            <person name="Rutherford K.M."/>
            <person name="Rutter S."/>
            <person name="Saunders D."/>
            <person name="Seeger K."/>
            <person name="Sharp S."/>
            <person name="Skelton J."/>
            <person name="Simmonds M.N."/>
            <person name="Squares R."/>
            <person name="Squares S."/>
            <person name="Stevens K."/>
            <person name="Taylor K."/>
            <person name="Taylor R.G."/>
            <person name="Tivey A."/>
            <person name="Walsh S.V."/>
            <person name="Warren T."/>
            <person name="Whitehead S."/>
            <person name="Woodward J.R."/>
            <person name="Volckaert G."/>
            <person name="Aert R."/>
            <person name="Robben J."/>
            <person name="Grymonprez B."/>
            <person name="Weltjens I."/>
            <person name="Vanstreels E."/>
            <person name="Rieger M."/>
            <person name="Schaefer M."/>
            <person name="Mueller-Auer S."/>
            <person name="Gabel C."/>
            <person name="Fuchs M."/>
            <person name="Duesterhoeft A."/>
            <person name="Fritzc C."/>
            <person name="Holzer E."/>
            <person name="Moestl D."/>
            <person name="Hilbert H."/>
            <person name="Borzym K."/>
            <person name="Langer I."/>
            <person name="Beck A."/>
            <person name="Lehrach H."/>
            <person name="Reinhardt R."/>
            <person name="Pohl T.M."/>
            <person name="Eger P."/>
            <person name="Zimmermann W."/>
            <person name="Wedler H."/>
            <person name="Wambutt R."/>
            <person name="Purnelle B."/>
            <person name="Goffeau A."/>
            <person name="Cadieu E."/>
            <person name="Dreano S."/>
            <person name="Gloux S."/>
            <person name="Lelaure V."/>
            <person name="Mottier S."/>
            <person name="Galibert F."/>
            <person name="Aves S.J."/>
            <person name="Xiang Z."/>
            <person name="Hunt C."/>
            <person name="Moore K."/>
            <person name="Hurst S.M."/>
            <person name="Lucas M."/>
            <person name="Rochet M."/>
            <person name="Gaillardin C."/>
            <person name="Tallada V.A."/>
            <person name="Garzon A."/>
            <person name="Thode G."/>
            <person name="Daga R.R."/>
            <person name="Cruzado L."/>
            <person name="Jimenez J."/>
            <person name="Sanchez M."/>
            <person name="del Rey F."/>
            <person name="Benito J."/>
            <person name="Dominguez A."/>
            <person name="Revuelta J.L."/>
            <person name="Moreno S."/>
            <person name="Armstrong J."/>
            <person name="Forsburg S.L."/>
            <person name="Cerutti L."/>
            <person name="Lowe T."/>
            <person name="McCombie W.R."/>
            <person name="Paulsen I."/>
            <person name="Potashkin J."/>
            <person name="Shpakovski G.V."/>
            <person name="Ussery D."/>
            <person name="Barrell B.G."/>
            <person name="Nurse P."/>
        </authorList>
    </citation>
    <scope>NUCLEOTIDE SEQUENCE [LARGE SCALE GENOMIC DNA]</scope>
    <source>
        <strain>972 / ATCC 24843</strain>
    </source>
</reference>
<reference key="2">
    <citation type="journal article" date="2011" name="Science">
        <title>Comparative functional genomics of the fission yeasts.</title>
        <authorList>
            <person name="Rhind N."/>
            <person name="Chen Z."/>
            <person name="Yassour M."/>
            <person name="Thompson D.A."/>
            <person name="Haas B.J."/>
            <person name="Habib N."/>
            <person name="Wapinski I."/>
            <person name="Roy S."/>
            <person name="Lin M.F."/>
            <person name="Heiman D.I."/>
            <person name="Young S.K."/>
            <person name="Furuya K."/>
            <person name="Guo Y."/>
            <person name="Pidoux A."/>
            <person name="Chen H.M."/>
            <person name="Robbertse B."/>
            <person name="Goldberg J.M."/>
            <person name="Aoki K."/>
            <person name="Bayne E.H."/>
            <person name="Berlin A.M."/>
            <person name="Desjardins C.A."/>
            <person name="Dobbs E."/>
            <person name="Dukaj L."/>
            <person name="Fan L."/>
            <person name="FitzGerald M.G."/>
            <person name="French C."/>
            <person name="Gujja S."/>
            <person name="Hansen K."/>
            <person name="Keifenheim D."/>
            <person name="Levin J.Z."/>
            <person name="Mosher R.A."/>
            <person name="Mueller C.A."/>
            <person name="Pfiffner J."/>
            <person name="Priest M."/>
            <person name="Russ C."/>
            <person name="Smialowska A."/>
            <person name="Swoboda P."/>
            <person name="Sykes S.M."/>
            <person name="Vaughn M."/>
            <person name="Vengrova S."/>
            <person name="Yoder R."/>
            <person name="Zeng Q."/>
            <person name="Allshire R."/>
            <person name="Baulcombe D."/>
            <person name="Birren B.W."/>
            <person name="Brown W."/>
            <person name="Ekwall K."/>
            <person name="Kellis M."/>
            <person name="Leatherwood J."/>
            <person name="Levin H."/>
            <person name="Margalit H."/>
            <person name="Martienssen R."/>
            <person name="Nieduszynski C.A."/>
            <person name="Spatafora J.W."/>
            <person name="Friedman N."/>
            <person name="Dalgaard J.Z."/>
            <person name="Baumann P."/>
            <person name="Niki H."/>
            <person name="Regev A."/>
            <person name="Nusbaum C."/>
        </authorList>
    </citation>
    <scope>REVISION OF GENE MODEL</scope>
</reference>
<reference key="3">
    <citation type="journal article" date="2011" name="Genetics">
        <title>Augmented annotation of the Schizosaccharomyces pombe genome reveals additional genes required for growth and viability.</title>
        <authorList>
            <person name="Bitton D.A."/>
            <person name="Wood V."/>
            <person name="Scutt P.J."/>
            <person name="Grallert A."/>
            <person name="Yates T."/>
            <person name="Smith D.L."/>
            <person name="Hagan I.M."/>
            <person name="Miller C.J."/>
        </authorList>
    </citation>
    <scope>REVISION OF GENE MODEL</scope>
    <scope>IDENTIFICATION BY MASS SPECTROMETRY</scope>
</reference>
<proteinExistence type="evidence at protein level"/>
<feature type="chain" id="PRO_0000316249" description="Prohibitin-2">
    <location>
        <begin position="1"/>
        <end position="288"/>
    </location>
</feature>
<feature type="transmembrane region" description="Helical; Signal-anchor for type II membrane protein" evidence="2">
    <location>
        <begin position="21"/>
        <end position="43"/>
    </location>
</feature>
<feature type="short sequence motif" description="AIM" evidence="1">
    <location>
        <begin position="125"/>
        <end position="128"/>
    </location>
</feature>
<comment type="function">
    <text evidence="1">Prohibitin probably acts as a holdase/unfoldase for the stabilization of newly synthesized mitochondrial proteins. Involved in mitophagy; may act as an adapter for atg8 that supports mitophagosome assembly. Negatively regulates the proteolytic processing of atg32 via the i-AAA protease. Acts as a negative regulator of the m-AAA protease.</text>
</comment>
<comment type="subunit">
    <text evidence="1">The mitochondrial prohibitin complex consists of two subunits (phb1 and phb2). The subunits assemble into a membrane-associated ring-shaped supercomplex of approximately 1 mDa.</text>
</comment>
<comment type="subcellular location">
    <subcellularLocation>
        <location evidence="1">Mitochondrion inner membrane</location>
        <topology evidence="1">Single-pass type II membrane protein</topology>
        <orientation evidence="1">Intermembrane side</orientation>
    </subcellularLocation>
</comment>
<comment type="similarity">
    <text evidence="3">Belongs to the prohibitin family.</text>
</comment>